<feature type="chain" id="PRO_0000364447" description="Fructose-1,6-bisphosphatase class 1">
    <location>
        <begin position="1"/>
        <end position="323"/>
    </location>
</feature>
<feature type="binding site" evidence="1">
    <location>
        <position position="88"/>
    </location>
    <ligand>
        <name>Mg(2+)</name>
        <dbReference type="ChEBI" id="CHEBI:18420"/>
        <label>1</label>
    </ligand>
</feature>
<feature type="binding site" evidence="1">
    <location>
        <position position="107"/>
    </location>
    <ligand>
        <name>Mg(2+)</name>
        <dbReference type="ChEBI" id="CHEBI:18420"/>
        <label>1</label>
    </ligand>
</feature>
<feature type="binding site" evidence="1">
    <location>
        <position position="107"/>
    </location>
    <ligand>
        <name>Mg(2+)</name>
        <dbReference type="ChEBI" id="CHEBI:18420"/>
        <label>2</label>
    </ligand>
</feature>
<feature type="binding site" evidence="1">
    <location>
        <position position="109"/>
    </location>
    <ligand>
        <name>Mg(2+)</name>
        <dbReference type="ChEBI" id="CHEBI:18420"/>
        <label>1</label>
    </ligand>
</feature>
<feature type="binding site" evidence="1">
    <location>
        <begin position="110"/>
        <end position="113"/>
    </location>
    <ligand>
        <name>substrate</name>
    </ligand>
</feature>
<feature type="binding site" evidence="1">
    <location>
        <position position="110"/>
    </location>
    <ligand>
        <name>Mg(2+)</name>
        <dbReference type="ChEBI" id="CHEBI:18420"/>
        <label>2</label>
    </ligand>
</feature>
<feature type="binding site" evidence="1">
    <location>
        <position position="200"/>
    </location>
    <ligand>
        <name>substrate</name>
    </ligand>
</feature>
<feature type="binding site" evidence="1">
    <location>
        <position position="272"/>
    </location>
    <ligand>
        <name>Mg(2+)</name>
        <dbReference type="ChEBI" id="CHEBI:18420"/>
        <label>2</label>
    </ligand>
</feature>
<name>F16PA_ACIBC</name>
<dbReference type="EC" id="3.1.3.11" evidence="1"/>
<dbReference type="EMBL" id="CP000863">
    <property type="protein sequence ID" value="ACC58151.1"/>
    <property type="molecule type" value="Genomic_DNA"/>
</dbReference>
<dbReference type="RefSeq" id="WP_000067971.1">
    <property type="nucleotide sequence ID" value="NZ_CP031380.1"/>
</dbReference>
<dbReference type="SMR" id="B2HWU2"/>
<dbReference type="KEGG" id="abc:ACICU_02839"/>
<dbReference type="HOGENOM" id="CLU_039977_0_0_6"/>
<dbReference type="UniPathway" id="UPA00138"/>
<dbReference type="Proteomes" id="UP000008839">
    <property type="component" value="Chromosome"/>
</dbReference>
<dbReference type="GO" id="GO:0005829">
    <property type="term" value="C:cytosol"/>
    <property type="evidence" value="ECO:0007669"/>
    <property type="project" value="TreeGrafter"/>
</dbReference>
<dbReference type="GO" id="GO:0042132">
    <property type="term" value="F:fructose 1,6-bisphosphate 1-phosphatase activity"/>
    <property type="evidence" value="ECO:0007669"/>
    <property type="project" value="UniProtKB-UniRule"/>
</dbReference>
<dbReference type="GO" id="GO:0000287">
    <property type="term" value="F:magnesium ion binding"/>
    <property type="evidence" value="ECO:0007669"/>
    <property type="project" value="UniProtKB-UniRule"/>
</dbReference>
<dbReference type="GO" id="GO:0030388">
    <property type="term" value="P:fructose 1,6-bisphosphate metabolic process"/>
    <property type="evidence" value="ECO:0007669"/>
    <property type="project" value="TreeGrafter"/>
</dbReference>
<dbReference type="GO" id="GO:0006002">
    <property type="term" value="P:fructose 6-phosphate metabolic process"/>
    <property type="evidence" value="ECO:0007669"/>
    <property type="project" value="TreeGrafter"/>
</dbReference>
<dbReference type="GO" id="GO:0006000">
    <property type="term" value="P:fructose metabolic process"/>
    <property type="evidence" value="ECO:0007669"/>
    <property type="project" value="TreeGrafter"/>
</dbReference>
<dbReference type="GO" id="GO:0006094">
    <property type="term" value="P:gluconeogenesis"/>
    <property type="evidence" value="ECO:0007669"/>
    <property type="project" value="UniProtKB-UniRule"/>
</dbReference>
<dbReference type="GO" id="GO:0005986">
    <property type="term" value="P:sucrose biosynthetic process"/>
    <property type="evidence" value="ECO:0007669"/>
    <property type="project" value="TreeGrafter"/>
</dbReference>
<dbReference type="CDD" id="cd00354">
    <property type="entry name" value="FBPase"/>
    <property type="match status" value="1"/>
</dbReference>
<dbReference type="FunFam" id="3.30.540.10:FF:000002">
    <property type="entry name" value="Fructose-1,6-bisphosphatase class 1"/>
    <property type="match status" value="1"/>
</dbReference>
<dbReference type="FunFam" id="3.40.190.80:FF:000011">
    <property type="entry name" value="Fructose-1,6-bisphosphatase class 1"/>
    <property type="match status" value="1"/>
</dbReference>
<dbReference type="Gene3D" id="3.40.190.80">
    <property type="match status" value="1"/>
</dbReference>
<dbReference type="Gene3D" id="3.30.540.10">
    <property type="entry name" value="Fructose-1,6-Bisphosphatase, subunit A, domain 1"/>
    <property type="match status" value="1"/>
</dbReference>
<dbReference type="HAMAP" id="MF_01855">
    <property type="entry name" value="FBPase_class1"/>
    <property type="match status" value="1"/>
</dbReference>
<dbReference type="InterPro" id="IPR044015">
    <property type="entry name" value="FBPase_C_dom"/>
</dbReference>
<dbReference type="InterPro" id="IPR000146">
    <property type="entry name" value="FBPase_class-1"/>
</dbReference>
<dbReference type="InterPro" id="IPR033391">
    <property type="entry name" value="FBPase_N"/>
</dbReference>
<dbReference type="InterPro" id="IPR028343">
    <property type="entry name" value="FBPtase"/>
</dbReference>
<dbReference type="NCBIfam" id="NF006779">
    <property type="entry name" value="PRK09293.1-3"/>
    <property type="match status" value="1"/>
</dbReference>
<dbReference type="NCBIfam" id="NF006780">
    <property type="entry name" value="PRK09293.1-4"/>
    <property type="match status" value="1"/>
</dbReference>
<dbReference type="PANTHER" id="PTHR11556">
    <property type="entry name" value="FRUCTOSE-1,6-BISPHOSPHATASE-RELATED"/>
    <property type="match status" value="1"/>
</dbReference>
<dbReference type="PANTHER" id="PTHR11556:SF35">
    <property type="entry name" value="SEDOHEPTULOSE-1,7-BISPHOSPHATASE, CHLOROPLASTIC"/>
    <property type="match status" value="1"/>
</dbReference>
<dbReference type="Pfam" id="PF00316">
    <property type="entry name" value="FBPase"/>
    <property type="match status" value="1"/>
</dbReference>
<dbReference type="Pfam" id="PF18913">
    <property type="entry name" value="FBPase_C"/>
    <property type="match status" value="1"/>
</dbReference>
<dbReference type="PIRSF" id="PIRSF500210">
    <property type="entry name" value="FBPtase"/>
    <property type="match status" value="1"/>
</dbReference>
<dbReference type="PIRSF" id="PIRSF000904">
    <property type="entry name" value="FBPtase_SBPase"/>
    <property type="match status" value="1"/>
</dbReference>
<dbReference type="PRINTS" id="PR00115">
    <property type="entry name" value="F16BPHPHTASE"/>
</dbReference>
<dbReference type="SUPFAM" id="SSF56655">
    <property type="entry name" value="Carbohydrate phosphatase"/>
    <property type="match status" value="1"/>
</dbReference>
<evidence type="ECO:0000255" key="1">
    <source>
        <dbReference type="HAMAP-Rule" id="MF_01855"/>
    </source>
</evidence>
<organism>
    <name type="scientific">Acinetobacter baumannii (strain ACICU)</name>
    <dbReference type="NCBI Taxonomy" id="405416"/>
    <lineage>
        <taxon>Bacteria</taxon>
        <taxon>Pseudomonadati</taxon>
        <taxon>Pseudomonadota</taxon>
        <taxon>Gammaproteobacteria</taxon>
        <taxon>Moraxellales</taxon>
        <taxon>Moraxellaceae</taxon>
        <taxon>Acinetobacter</taxon>
        <taxon>Acinetobacter calcoaceticus/baumannii complex</taxon>
    </lineage>
</organism>
<protein>
    <recommendedName>
        <fullName evidence="1">Fructose-1,6-bisphosphatase class 1</fullName>
        <shortName evidence="1">FBPase class 1</shortName>
        <ecNumber evidence="1">3.1.3.11</ecNumber>
    </recommendedName>
    <alternativeName>
        <fullName evidence="1">D-fructose-1,6-bisphosphate 1-phosphohydrolase class 1</fullName>
    </alternativeName>
</protein>
<comment type="catalytic activity">
    <reaction evidence="1">
        <text>beta-D-fructose 1,6-bisphosphate + H2O = beta-D-fructose 6-phosphate + phosphate</text>
        <dbReference type="Rhea" id="RHEA:11064"/>
        <dbReference type="ChEBI" id="CHEBI:15377"/>
        <dbReference type="ChEBI" id="CHEBI:32966"/>
        <dbReference type="ChEBI" id="CHEBI:43474"/>
        <dbReference type="ChEBI" id="CHEBI:57634"/>
        <dbReference type="EC" id="3.1.3.11"/>
    </reaction>
</comment>
<comment type="cofactor">
    <cofactor evidence="1">
        <name>Mg(2+)</name>
        <dbReference type="ChEBI" id="CHEBI:18420"/>
    </cofactor>
    <text evidence="1">Binds 2 magnesium ions per subunit.</text>
</comment>
<comment type="pathway">
    <text evidence="1">Carbohydrate biosynthesis; gluconeogenesis.</text>
</comment>
<comment type="subunit">
    <text evidence="1">Homotetramer.</text>
</comment>
<comment type="subcellular location">
    <subcellularLocation>
        <location evidence="1">Cytoplasm</location>
    </subcellularLocation>
</comment>
<comment type="similarity">
    <text evidence="1">Belongs to the FBPase class 1 family.</text>
</comment>
<keyword id="KW-0119">Carbohydrate metabolism</keyword>
<keyword id="KW-0963">Cytoplasm</keyword>
<keyword id="KW-0378">Hydrolase</keyword>
<keyword id="KW-0460">Magnesium</keyword>
<keyword id="KW-0479">Metal-binding</keyword>
<sequence>MSNLTLSQFLQQEKGNLTPELAQVIDTIAATCKTIDQALQKGALAGILGSAGNENVQGETQKKLDVISNDYLIDALKVHPHVGGLASEELDDFTPAQENGEYLVLFDPLDGSSNIDINMCVGTIFSILPAKNAVTQAQDFMQAGTQQVAAGYVLYGPSTMMALTVGNGVAFFTLDPETQTFLLTTENVQVSADTQEFAINASNQRHWEQPVKQYIEELLAGKTSVREKDFNMRWVACMVGDVHRILCRGGIFLYPYDLKDPKKAGRLRLMYEANPMSMLIEQAGGASTTGRVRILEIEPTELHQRVPVIIGSKNEVERVTSYH</sequence>
<proteinExistence type="inferred from homology"/>
<accession>B2HWU2</accession>
<reference key="1">
    <citation type="journal article" date="2008" name="Antimicrob. Agents Chemother.">
        <title>Whole-genome pyrosequencing of an epidemic multidrug-resistant Acinetobacter baumannii strain belonging to the European clone II group.</title>
        <authorList>
            <person name="Iacono M."/>
            <person name="Villa L."/>
            <person name="Fortini D."/>
            <person name="Bordoni R."/>
            <person name="Imperi F."/>
            <person name="Bonnal R.J."/>
            <person name="Sicheritz-Ponten T."/>
            <person name="De Bellis G."/>
            <person name="Visca P."/>
            <person name="Cassone A."/>
            <person name="Carattoli A."/>
        </authorList>
    </citation>
    <scope>NUCLEOTIDE SEQUENCE [LARGE SCALE GENOMIC DNA]</scope>
    <source>
        <strain>ACICU</strain>
    </source>
</reference>
<gene>
    <name evidence="1" type="primary">fbp</name>
    <name type="ordered locus">ACICU_02839</name>
</gene>